<feature type="chain" id="PRO_0000270538" description="Iron transporter SMF3">
    <location>
        <begin position="1"/>
        <end position="473"/>
    </location>
</feature>
<feature type="transmembrane region" description="Helical" evidence="1">
    <location>
        <begin position="14"/>
        <end position="34"/>
    </location>
</feature>
<feature type="transmembrane region" description="Helical" evidence="1">
    <location>
        <begin position="44"/>
        <end position="64"/>
    </location>
</feature>
<feature type="transmembrane region" description="Helical" evidence="1">
    <location>
        <begin position="97"/>
        <end position="117"/>
    </location>
</feature>
<feature type="transmembrane region" description="Helical" evidence="1">
    <location>
        <begin position="119"/>
        <end position="139"/>
    </location>
</feature>
<feature type="transmembrane region" description="Helical" evidence="1">
    <location>
        <begin position="152"/>
        <end position="172"/>
    </location>
</feature>
<feature type="transmembrane region" description="Helical" evidence="1">
    <location>
        <begin position="198"/>
        <end position="218"/>
    </location>
</feature>
<feature type="transmembrane region" description="Helical" evidence="1">
    <location>
        <begin position="257"/>
        <end position="277"/>
    </location>
</feature>
<feature type="transmembrane region" description="Helical" evidence="1">
    <location>
        <begin position="297"/>
        <end position="317"/>
    </location>
</feature>
<feature type="transmembrane region" description="Helical" evidence="1">
    <location>
        <begin position="352"/>
        <end position="372"/>
    </location>
</feature>
<feature type="transmembrane region" description="Helical" evidence="1">
    <location>
        <begin position="373"/>
        <end position="393"/>
    </location>
</feature>
<feature type="transmembrane region" description="Helical" evidence="1">
    <location>
        <begin position="448"/>
        <end position="468"/>
    </location>
</feature>
<feature type="glycosylation site" description="N-linked (GlcNAc...) asparagine" evidence="1">
    <location>
        <position position="87"/>
    </location>
</feature>
<evidence type="ECO:0000255" key="1"/>
<evidence type="ECO:0000269" key="2">
    <source>
    </source>
</evidence>
<evidence type="ECO:0000269" key="3">
    <source>
    </source>
</evidence>
<evidence type="ECO:0000305" key="4"/>
<comment type="function">
    <text evidence="2 3">Has a role in controlling the cellular iron ion levels. Mobilizes vacuolar stores of iron in conditions of low iron levels.</text>
</comment>
<comment type="subcellular location">
    <subcellularLocation>
        <location>Vacuole membrane</location>
        <topology>Multi-pass membrane protein</topology>
    </subcellularLocation>
    <subcellularLocation>
        <location>Endoplasmic reticulum membrane</location>
        <topology>Multi-pass membrane protein</topology>
    </subcellularLocation>
</comment>
<comment type="similarity">
    <text evidence="4">Belongs to the NRAMP family.</text>
</comment>
<organism>
    <name type="scientific">Saccharomyces cerevisiae (strain ATCC 204508 / S288c)</name>
    <name type="common">Baker's yeast</name>
    <dbReference type="NCBI Taxonomy" id="559292"/>
    <lineage>
        <taxon>Eukaryota</taxon>
        <taxon>Fungi</taxon>
        <taxon>Dikarya</taxon>
        <taxon>Ascomycota</taxon>
        <taxon>Saccharomycotina</taxon>
        <taxon>Saccharomycetes</taxon>
        <taxon>Saccharomycetales</taxon>
        <taxon>Saccharomycetaceae</taxon>
        <taxon>Saccharomyces</taxon>
    </lineage>
</organism>
<name>SMF3_YEAST</name>
<accession>Q12078</accession>
<accession>D6VY36</accession>
<sequence length="473" mass="51775">MRSYMQILQKFAKFIGPGILVSVAYMDPGNYATSVSGGAQYKYTLLFSIFISNIFAVLLQCLCVKLGTITGYDLAENCRHNLPKKLNYTLYLFAEVAIIATDLAEVVGTAIALQILFKIPLTWGVLLTVLDVLVILMFYTPNGQSLKKVRVFEFGVGILVIGTCICFVLELFKVSIPDKAELFKGFLPSNIIFKEQQALYISLGILGATVMPHSLYLGSSIVKPRLHDYDLKKYGKVNARPSLSAIKYTLNYAYAELIISLFLIATFVNSAILIVAGATLSGQPEAEDADLLSIYKLLVHYISPAAGLIFALAMLCSGQSAGIICTLAGQIVSEGFLQWSLPPWATRLCTRLIAIVPCLFVTLTMGEKGISDILNFSQVVLSLILPIVSAPLIYFTANRKLMVVHDENGVVRAPADVNAIADETTPLNSKHSKIVDFTNSRLLTYTSVFVWALIGSLNCYLVISYLLGADIHF</sequence>
<reference key="1">
    <citation type="submission" date="1995-08" db="EMBL/GenBank/DDBJ databases">
        <authorList>
            <person name="Ahne F."/>
            <person name="Leibhardt S."/>
            <person name="Gstoehl M."/>
            <person name="Wendel S."/>
            <person name="Berthe-Corti L."/>
            <person name="Eckardt-Schupp F."/>
        </authorList>
    </citation>
    <scope>NUCLEOTIDE SEQUENCE [GENOMIC DNA]</scope>
    <source>
        <strain>D7</strain>
    </source>
</reference>
<reference key="2">
    <citation type="journal article" date="1997" name="Nature">
        <title>The nucleotide sequence of Saccharomyces cerevisiae chromosome XII.</title>
        <authorList>
            <person name="Johnston M."/>
            <person name="Hillier L.W."/>
            <person name="Riles L."/>
            <person name="Albermann K."/>
            <person name="Andre B."/>
            <person name="Ansorge W."/>
            <person name="Benes V."/>
            <person name="Brueckner M."/>
            <person name="Delius H."/>
            <person name="Dubois E."/>
            <person name="Duesterhoeft A."/>
            <person name="Entian K.-D."/>
            <person name="Floeth M."/>
            <person name="Goffeau A."/>
            <person name="Hebling U."/>
            <person name="Heumann K."/>
            <person name="Heuss-Neitzel D."/>
            <person name="Hilbert H."/>
            <person name="Hilger F."/>
            <person name="Kleine K."/>
            <person name="Koetter P."/>
            <person name="Louis E.J."/>
            <person name="Messenguy F."/>
            <person name="Mewes H.-W."/>
            <person name="Miosga T."/>
            <person name="Moestl D."/>
            <person name="Mueller-Auer S."/>
            <person name="Nentwich U."/>
            <person name="Obermaier B."/>
            <person name="Piravandi E."/>
            <person name="Pohl T.M."/>
            <person name="Portetelle D."/>
            <person name="Purnelle B."/>
            <person name="Rechmann S."/>
            <person name="Rieger M."/>
            <person name="Rinke M."/>
            <person name="Rose M."/>
            <person name="Scharfe M."/>
            <person name="Scherens B."/>
            <person name="Scholler P."/>
            <person name="Schwager C."/>
            <person name="Schwarz S."/>
            <person name="Underwood A.P."/>
            <person name="Urrestarazu L.A."/>
            <person name="Vandenbol M."/>
            <person name="Verhasselt P."/>
            <person name="Vierendeels F."/>
            <person name="Voet M."/>
            <person name="Volckaert G."/>
            <person name="Voss H."/>
            <person name="Wambutt R."/>
            <person name="Wedler E."/>
            <person name="Wedler H."/>
            <person name="Zimmermann F.K."/>
            <person name="Zollner A."/>
            <person name="Hani J."/>
            <person name="Hoheisel J.D."/>
        </authorList>
    </citation>
    <scope>NUCLEOTIDE SEQUENCE [LARGE SCALE GENOMIC DNA]</scope>
    <source>
        <strain>ATCC 204508 / S288c</strain>
    </source>
</reference>
<reference key="3">
    <citation type="journal article" date="2014" name="G3 (Bethesda)">
        <title>The reference genome sequence of Saccharomyces cerevisiae: Then and now.</title>
        <authorList>
            <person name="Engel S.R."/>
            <person name="Dietrich F.S."/>
            <person name="Fisk D.G."/>
            <person name="Binkley G."/>
            <person name="Balakrishnan R."/>
            <person name="Costanzo M.C."/>
            <person name="Dwight S.S."/>
            <person name="Hitz B.C."/>
            <person name="Karra K."/>
            <person name="Nash R.S."/>
            <person name="Weng S."/>
            <person name="Wong E.D."/>
            <person name="Lloyd P."/>
            <person name="Skrzypek M.S."/>
            <person name="Miyasato S.R."/>
            <person name="Simison M."/>
            <person name="Cherry J.M."/>
        </authorList>
    </citation>
    <scope>GENOME REANNOTATION</scope>
    <source>
        <strain>ATCC 204508 / S288c</strain>
    </source>
</reference>
<reference key="4">
    <citation type="journal article" date="2000" name="J. Biol. Chem.">
        <title>The family of SMF metal ion transporters in yeast cells.</title>
        <authorList>
            <person name="Cohen A."/>
            <person name="Nelson H."/>
            <person name="Nelson N."/>
        </authorList>
    </citation>
    <scope>FUNCTION</scope>
</reference>
<reference key="5">
    <citation type="journal article" date="2000" name="Mol. Cell. Biol.">
        <title>Saccharomyces cerevisiae expresses three functionally distinct homologues of the nramp family of metal transporters.</title>
        <authorList>
            <person name="Portnoy M.E."/>
            <person name="Liu X.F."/>
            <person name="Culotta V.C."/>
        </authorList>
    </citation>
    <scope>FUNCTION</scope>
    <scope>SUBCELLULAR LOCATION</scope>
</reference>
<reference key="6">
    <citation type="journal article" date="2003" name="Nature">
        <title>Global analysis of protein localization in budding yeast.</title>
        <authorList>
            <person name="Huh W.-K."/>
            <person name="Falvo J.V."/>
            <person name="Gerke L.C."/>
            <person name="Carroll A.S."/>
            <person name="Howson R.W."/>
            <person name="Weissman J.S."/>
            <person name="O'Shea E.K."/>
        </authorList>
    </citation>
    <scope>SUBCELLULAR LOCATION [LARGE SCALE ANALYSIS]</scope>
</reference>
<reference key="7">
    <citation type="journal article" date="2008" name="Mol. Cell. Proteomics">
        <title>A multidimensional chromatography technology for in-depth phosphoproteome analysis.</title>
        <authorList>
            <person name="Albuquerque C.P."/>
            <person name="Smolka M.B."/>
            <person name="Payne S.H."/>
            <person name="Bafna V."/>
            <person name="Eng J."/>
            <person name="Zhou H."/>
        </authorList>
    </citation>
    <scope>IDENTIFICATION BY MASS SPECTROMETRY [LARGE SCALE ANALYSIS]</scope>
</reference>
<keyword id="KW-0256">Endoplasmic reticulum</keyword>
<keyword id="KW-0325">Glycoprotein</keyword>
<keyword id="KW-0406">Ion transport</keyword>
<keyword id="KW-0408">Iron</keyword>
<keyword id="KW-0410">Iron transport</keyword>
<keyword id="KW-0472">Membrane</keyword>
<keyword id="KW-0479">Metal-binding</keyword>
<keyword id="KW-1185">Reference proteome</keyword>
<keyword id="KW-0812">Transmembrane</keyword>
<keyword id="KW-1133">Transmembrane helix</keyword>
<keyword id="KW-0813">Transport</keyword>
<keyword id="KW-0926">Vacuole</keyword>
<proteinExistence type="evidence at protein level"/>
<gene>
    <name type="primary">SMF3</name>
    <name type="ordered locus">YLR034C</name>
</gene>
<protein>
    <recommendedName>
        <fullName>Iron transporter SMF3</fullName>
    </recommendedName>
</protein>
<dbReference type="EMBL" id="U34585">
    <property type="protein sequence ID" value="AAA77056.1"/>
    <property type="molecule type" value="Genomic_DNA"/>
</dbReference>
<dbReference type="EMBL" id="Z73206">
    <property type="protein sequence ID" value="CAA97558.1"/>
    <property type="molecule type" value="Genomic_DNA"/>
</dbReference>
<dbReference type="EMBL" id="BK006945">
    <property type="protein sequence ID" value="DAA09352.1"/>
    <property type="molecule type" value="Genomic_DNA"/>
</dbReference>
<dbReference type="PIR" id="S59365">
    <property type="entry name" value="S59365"/>
</dbReference>
<dbReference type="RefSeq" id="NP_013134.1">
    <property type="nucleotide sequence ID" value="NM_001181921.2"/>
</dbReference>
<dbReference type="SMR" id="Q12078"/>
<dbReference type="BioGRID" id="31308">
    <property type="interactions" value="78"/>
</dbReference>
<dbReference type="DIP" id="DIP-4163N"/>
<dbReference type="FunCoup" id="Q12078">
    <property type="interactions" value="312"/>
</dbReference>
<dbReference type="IntAct" id="Q12078">
    <property type="interactions" value="14"/>
</dbReference>
<dbReference type="MINT" id="Q12078"/>
<dbReference type="STRING" id="4932.YLR034C"/>
<dbReference type="TCDB" id="2.A.55.1.3">
    <property type="family name" value="the metal ion (mn(2+)-iron) transporter (nramp) family"/>
</dbReference>
<dbReference type="GlyCosmos" id="Q12078">
    <property type="glycosylation" value="1 site, No reported glycans"/>
</dbReference>
<dbReference type="GlyGen" id="Q12078">
    <property type="glycosylation" value="1 site"/>
</dbReference>
<dbReference type="iPTMnet" id="Q12078"/>
<dbReference type="PaxDb" id="4932-YLR034C"/>
<dbReference type="PeptideAtlas" id="Q12078"/>
<dbReference type="EnsemblFungi" id="YLR034C_mRNA">
    <property type="protein sequence ID" value="YLR034C"/>
    <property type="gene ID" value="YLR034C"/>
</dbReference>
<dbReference type="GeneID" id="850721"/>
<dbReference type="KEGG" id="sce:YLR034C"/>
<dbReference type="AGR" id="SGD:S000004024"/>
<dbReference type="SGD" id="S000004024">
    <property type="gene designation" value="SMF3"/>
</dbReference>
<dbReference type="VEuPathDB" id="FungiDB:YLR034C"/>
<dbReference type="eggNOG" id="KOG1291">
    <property type="taxonomic scope" value="Eukaryota"/>
</dbReference>
<dbReference type="HOGENOM" id="CLU_020088_4_0_1"/>
<dbReference type="InParanoid" id="Q12078"/>
<dbReference type="OMA" id="PWMQFYQ"/>
<dbReference type="OrthoDB" id="409173at2759"/>
<dbReference type="BioCyc" id="YEAST:G3O-32193-MONOMER"/>
<dbReference type="BioGRID-ORCS" id="850721">
    <property type="hits" value="0 hits in 10 CRISPR screens"/>
</dbReference>
<dbReference type="PRO" id="PR:Q12078"/>
<dbReference type="Proteomes" id="UP000002311">
    <property type="component" value="Chromosome XII"/>
</dbReference>
<dbReference type="RNAct" id="Q12078">
    <property type="molecule type" value="protein"/>
</dbReference>
<dbReference type="GO" id="GO:0005789">
    <property type="term" value="C:endoplasmic reticulum membrane"/>
    <property type="evidence" value="ECO:0007669"/>
    <property type="project" value="UniProtKB-SubCell"/>
</dbReference>
<dbReference type="GO" id="GO:0000329">
    <property type="term" value="C:fungal-type vacuole membrane"/>
    <property type="evidence" value="ECO:0000314"/>
    <property type="project" value="SGD"/>
</dbReference>
<dbReference type="GO" id="GO:0015086">
    <property type="term" value="F:cadmium ion transmembrane transporter activity"/>
    <property type="evidence" value="ECO:0000318"/>
    <property type="project" value="GO_Central"/>
</dbReference>
<dbReference type="GO" id="GO:0022890">
    <property type="term" value="F:inorganic cation transmembrane transporter activity"/>
    <property type="evidence" value="ECO:0000250"/>
    <property type="project" value="SGD"/>
</dbReference>
<dbReference type="GO" id="GO:0005384">
    <property type="term" value="F:manganese ion transmembrane transporter activity"/>
    <property type="evidence" value="ECO:0000318"/>
    <property type="project" value="GO_Central"/>
</dbReference>
<dbReference type="GO" id="GO:0046872">
    <property type="term" value="F:metal ion binding"/>
    <property type="evidence" value="ECO:0007669"/>
    <property type="project" value="UniProtKB-KW"/>
</dbReference>
<dbReference type="GO" id="GO:0006879">
    <property type="term" value="P:intracellular iron ion homeostasis"/>
    <property type="evidence" value="ECO:0000315"/>
    <property type="project" value="SGD"/>
</dbReference>
<dbReference type="GO" id="GO:0030026">
    <property type="term" value="P:intracellular manganese ion homeostasis"/>
    <property type="evidence" value="ECO:0000318"/>
    <property type="project" value="GO_Central"/>
</dbReference>
<dbReference type="GO" id="GO:0034755">
    <property type="term" value="P:iron ion transmembrane transport"/>
    <property type="evidence" value="ECO:0000318"/>
    <property type="project" value="GO_Central"/>
</dbReference>
<dbReference type="GO" id="GO:0006826">
    <property type="term" value="P:iron ion transport"/>
    <property type="evidence" value="ECO:0000315"/>
    <property type="project" value="SGD"/>
</dbReference>
<dbReference type="GO" id="GO:0006828">
    <property type="term" value="P:manganese ion transport"/>
    <property type="evidence" value="ECO:0000318"/>
    <property type="project" value="GO_Central"/>
</dbReference>
<dbReference type="HAMAP" id="MF_00221">
    <property type="entry name" value="NRAMP"/>
    <property type="match status" value="1"/>
</dbReference>
<dbReference type="InterPro" id="IPR001046">
    <property type="entry name" value="NRAMP_fam"/>
</dbReference>
<dbReference type="NCBIfam" id="TIGR01197">
    <property type="entry name" value="nramp"/>
    <property type="match status" value="1"/>
</dbReference>
<dbReference type="NCBIfam" id="NF037982">
    <property type="entry name" value="Nramp_1"/>
    <property type="match status" value="1"/>
</dbReference>
<dbReference type="PANTHER" id="PTHR11706:SF29">
    <property type="entry name" value="IRON TRANSPORTER SMF3"/>
    <property type="match status" value="1"/>
</dbReference>
<dbReference type="PANTHER" id="PTHR11706">
    <property type="entry name" value="SOLUTE CARRIER PROTEIN FAMILY 11 MEMBER"/>
    <property type="match status" value="1"/>
</dbReference>
<dbReference type="Pfam" id="PF01566">
    <property type="entry name" value="Nramp"/>
    <property type="match status" value="1"/>
</dbReference>
<dbReference type="PRINTS" id="PR00447">
    <property type="entry name" value="NATRESASSCMP"/>
</dbReference>